<evidence type="ECO:0000305" key="1"/>
<comment type="function">
    <text>Required for transposition of transposon Tn3.</text>
</comment>
<comment type="similarity">
    <text evidence="1">Belongs to the transposase 7 family.</text>
</comment>
<name>TNP3_ECOLX</name>
<keyword id="KW-0233">DNA recombination</keyword>
<keyword id="KW-0238">DNA-binding</keyword>
<keyword id="KW-0814">Transposable element</keyword>
<keyword id="KW-0815">Transposition</keyword>
<dbReference type="EMBL" id="V00613">
    <property type="protein sequence ID" value="CAA23884.1"/>
    <property type="status" value="ALT_SEQ"/>
    <property type="molecule type" value="Genomic_DNA"/>
</dbReference>
<dbReference type="PIR" id="A03538">
    <property type="entry name" value="TQECT"/>
</dbReference>
<dbReference type="RefSeq" id="NP_943293.1">
    <property type="nucleotide sequence ID" value="NC_005248.1"/>
</dbReference>
<dbReference type="SMR" id="P03008"/>
<dbReference type="GO" id="GO:0003677">
    <property type="term" value="F:DNA binding"/>
    <property type="evidence" value="ECO:0007669"/>
    <property type="project" value="UniProtKB-KW"/>
</dbReference>
<dbReference type="GO" id="GO:0004803">
    <property type="term" value="F:transposase activity"/>
    <property type="evidence" value="ECO:0007669"/>
    <property type="project" value="InterPro"/>
</dbReference>
<dbReference type="GO" id="GO:0006313">
    <property type="term" value="P:DNA transposition"/>
    <property type="evidence" value="ECO:0007669"/>
    <property type="project" value="InterPro"/>
</dbReference>
<dbReference type="InterPro" id="IPR025296">
    <property type="entry name" value="DUF4158"/>
</dbReference>
<dbReference type="InterPro" id="IPR047653">
    <property type="entry name" value="Tn3-like_transpos"/>
</dbReference>
<dbReference type="InterPro" id="IPR002513">
    <property type="entry name" value="Tn3_Tnp_DDE_dom"/>
</dbReference>
<dbReference type="NCBIfam" id="NF033527">
    <property type="entry name" value="transpos_Tn3"/>
    <property type="match status" value="1"/>
</dbReference>
<dbReference type="Pfam" id="PF01526">
    <property type="entry name" value="DDE_Tnp_Tn3"/>
    <property type="match status" value="1"/>
</dbReference>
<dbReference type="Pfam" id="PF13700">
    <property type="entry name" value="DUF4158"/>
    <property type="match status" value="1"/>
</dbReference>
<gene>
    <name type="primary">tnpA</name>
</gene>
<proteinExistence type="inferred from homology"/>
<sequence>MLKKPSGREADMPVDFLTTEQVESYGRFTGEPDELQLARYFHLDEADKEFIGKSRGDHNRLGIALQIGCVRFLGTFLTDMNHIPSGVRHFTARQLGIRDITVLAEYGQRENTRREHAALIRQHYQYREFAWPWTFRLTRLLYTRSWISNERPGLLFDLATGWLMQHRIILPGATTLTRLISEVREKATLRLWNKLALIPSAEQRSQLEMLLGPTDCSRLSLLESLKKGPVTISGPAFNEAIERWKTLNDFGLHAENLSTLPAVRLKNLARYAGMTSVFNIARMSPQKRMAVLVAFVLAWETLALDDALEVLDAMLAVIIRDARKIGQKKRLRSLKDLDKSALALASACSYLLKEETPDESIRAEVFSYIPRQKLAEIITLVREIARPSDDNFHDEMVEQYGRVRRFLPHLLNTVKFSSAPAGVTTLNACDYLSREFSSRRQFFDDAPTEIISQSWKRLVINKEKHITRRGYTLCFLSKLQDSLRRRDVYVTGSNRWGDPRARLLQGADWQANRIKVYRSLGHPTDPQEAIKSLGHQLDSRYRQVAARLGENEAVELDVSGPKPRLTISPLASLDEPDSLKRLSKMISDLLPPVDLTELLLEINAHTGFADEFFHASEASARVDDLPVSISAVLMAEACNIGLEPLIRSNVPALTRHRLNWTKANYLRAETITSANARLVDFQATLPLAQIWGGGEVASADGMRFVTPVRTINAGPNRKYFGNNRGITWYNFVSDQYSGFHGFHGIVIPGTLRDSIFVLEGLLEQETGLNPTEIMTDTAGASDLVFGLFWLLGYQFSPRLADAGASVFWRMDHDADYGVLNDIARGQSDPRKIVLQWDEMIRTAGSLKLGKVQASVLVRSLLKSERPSGLTQAIIEVGRINKTLYLLNYIDDEDYRRRILTQLNRGESRHAVARAICHGQKGEIRKRYTDGQEDQLGALGLVTNAVVLWNTIYMQAALDHLRAQGETLNDEDIARLSPLCHGHINMLGHYSFTLAELVTKGHLRPLKEASEAENVA</sequence>
<reference key="1">
    <citation type="journal article" date="1979" name="Cell">
        <title>DNA sequence analysis of the transposon Tn3: three genes and three sites involved in transposition of Tn3.</title>
        <authorList>
            <person name="Heffron F."/>
            <person name="McCarthy B.J."/>
            <person name="Ohtsubo H."/>
            <person name="Ohtsubo E."/>
        </authorList>
    </citation>
    <scope>NUCLEOTIDE SEQUENCE [GENOMIC DNA]</scope>
    <source>
        <transposon>Tn3</transposon>
    </source>
</reference>
<organism>
    <name type="scientific">Escherichia coli</name>
    <dbReference type="NCBI Taxonomy" id="562"/>
    <lineage>
        <taxon>Bacteria</taxon>
        <taxon>Pseudomonadati</taxon>
        <taxon>Pseudomonadota</taxon>
        <taxon>Gammaproteobacteria</taxon>
        <taxon>Enterobacterales</taxon>
        <taxon>Enterobacteriaceae</taxon>
        <taxon>Escherichia</taxon>
    </lineage>
</organism>
<feature type="chain" id="PRO_0000075427" description="Transposase for transposon Tn3">
    <location>
        <begin position="1"/>
        <end position="1015"/>
    </location>
</feature>
<protein>
    <recommendedName>
        <fullName>Transposase for transposon Tn3</fullName>
    </recommendedName>
</protein>
<accession>P03008</accession>